<proteinExistence type="evidence at transcript level"/>
<comment type="function">
    <text evidence="1">Serine protease inhibitor.</text>
</comment>
<comment type="subcellular location">
    <subcellularLocation>
        <location evidence="1">Secreted</location>
    </subcellularLocation>
</comment>
<comment type="tissue specificity">
    <text>Expressed by the venom gland.</text>
</comment>
<comment type="similarity">
    <text evidence="4">Belongs to the venom Kunitz-type family.</text>
</comment>
<accession>A8Y7N9</accession>
<keyword id="KW-1015">Disulfide bond</keyword>
<keyword id="KW-0646">Protease inhibitor</keyword>
<keyword id="KW-0873">Pyrrolidone carboxylic acid</keyword>
<keyword id="KW-0964">Secreted</keyword>
<keyword id="KW-0722">Serine protease inhibitor</keyword>
<keyword id="KW-0732">Signal</keyword>
<sequence length="96" mass="10349">MSSGGLLLLLGFLTLWAELTPISGQNRPMFCHLPADSGRCKAHIPRFYYNPASNQCQGFTYGGCGGNANNFETRDQCRHTCGASGNVGPRPRIASN</sequence>
<reference key="1">
    <citation type="submission" date="2006-11" db="EMBL/GenBank/DDBJ databases">
        <title>BPTI petides from Chinese Daboia russellii siamensis.</title>
        <authorList>
            <person name="Guo C."/>
            <person name="McClean S."/>
            <person name="Shaw C."/>
            <person name="Rao P."/>
            <person name="Ye M."/>
            <person name="Anthony John B."/>
        </authorList>
    </citation>
    <scope>NUCLEOTIDE SEQUENCE [MRNA]</scope>
    <source>
        <strain>China</strain>
        <tissue>Venom gland</tissue>
    </source>
</reference>
<evidence type="ECO:0000250" key="1"/>
<evidence type="ECO:0000255" key="2"/>
<evidence type="ECO:0000255" key="3">
    <source>
        <dbReference type="PROSITE-ProRule" id="PRU00031"/>
    </source>
</evidence>
<evidence type="ECO:0000305" key="4"/>
<organism>
    <name type="scientific">Daboia siamensis</name>
    <name type="common">Eastern Russel's viper</name>
    <name type="synonym">Daboia russelii siamensis</name>
    <dbReference type="NCBI Taxonomy" id="343250"/>
    <lineage>
        <taxon>Eukaryota</taxon>
        <taxon>Metazoa</taxon>
        <taxon>Chordata</taxon>
        <taxon>Craniata</taxon>
        <taxon>Vertebrata</taxon>
        <taxon>Euteleostomi</taxon>
        <taxon>Lepidosauria</taxon>
        <taxon>Squamata</taxon>
        <taxon>Bifurcata</taxon>
        <taxon>Unidentata</taxon>
        <taxon>Episquamata</taxon>
        <taxon>Toxicofera</taxon>
        <taxon>Serpentes</taxon>
        <taxon>Colubroidea</taxon>
        <taxon>Viperidae</taxon>
        <taxon>Viperinae</taxon>
        <taxon>Daboia</taxon>
    </lineage>
</organism>
<protein>
    <recommendedName>
        <fullName>Kunitz-type serine protease inhibitor C6</fullName>
    </recommendedName>
    <alternativeName>
        <fullName>BPTI-6</fullName>
    </alternativeName>
    <alternativeName>
        <fullName>Trypsin inhibitor 6</fullName>
    </alternativeName>
    <alternativeName>
        <fullName>Trypsin inhibitor C6</fullName>
    </alternativeName>
</protein>
<feature type="signal peptide" evidence="1">
    <location>
        <begin position="1"/>
        <end position="24"/>
    </location>
</feature>
<feature type="chain" id="PRO_5000284432" description="Kunitz-type serine protease inhibitor C6">
    <location>
        <begin position="25"/>
        <end position="84"/>
    </location>
</feature>
<feature type="propeptide" id="PRO_0000377471" evidence="2">
    <location>
        <begin position="85"/>
        <end position="96"/>
    </location>
</feature>
<feature type="domain" description="BPTI/Kunitz inhibitor" evidence="3">
    <location>
        <begin position="31"/>
        <end position="81"/>
    </location>
</feature>
<feature type="site" description="Reactive bond for trypsin" evidence="1">
    <location>
        <begin position="41"/>
        <end position="42"/>
    </location>
</feature>
<feature type="modified residue" description="Pyrrolidone carboxylic acid" evidence="1">
    <location>
        <position position="25"/>
    </location>
</feature>
<feature type="disulfide bond" evidence="3">
    <location>
        <begin position="31"/>
        <end position="81"/>
    </location>
</feature>
<feature type="disulfide bond" evidence="3">
    <location>
        <begin position="40"/>
        <end position="64"/>
    </location>
</feature>
<feature type="disulfide bond" evidence="3">
    <location>
        <begin position="56"/>
        <end position="77"/>
    </location>
</feature>
<dbReference type="EMBL" id="AM411366">
    <property type="protein sequence ID" value="CAL69607.1"/>
    <property type="molecule type" value="mRNA"/>
</dbReference>
<dbReference type="SMR" id="A8Y7N9"/>
<dbReference type="MEROPS" id="I02.062"/>
<dbReference type="GO" id="GO:0005615">
    <property type="term" value="C:extracellular space"/>
    <property type="evidence" value="ECO:0007669"/>
    <property type="project" value="TreeGrafter"/>
</dbReference>
<dbReference type="GO" id="GO:0004867">
    <property type="term" value="F:serine-type endopeptidase inhibitor activity"/>
    <property type="evidence" value="ECO:0007669"/>
    <property type="project" value="UniProtKB-KW"/>
</dbReference>
<dbReference type="CDD" id="cd22608">
    <property type="entry name" value="Kunitz_PPTI-like"/>
    <property type="match status" value="1"/>
</dbReference>
<dbReference type="FunFam" id="4.10.410.10:FF:000021">
    <property type="entry name" value="Serine protease inhibitor, putative"/>
    <property type="match status" value="1"/>
</dbReference>
<dbReference type="Gene3D" id="4.10.410.10">
    <property type="entry name" value="Pancreatic trypsin inhibitor Kunitz domain"/>
    <property type="match status" value="1"/>
</dbReference>
<dbReference type="InterPro" id="IPR002223">
    <property type="entry name" value="Kunitz_BPTI"/>
</dbReference>
<dbReference type="InterPro" id="IPR036880">
    <property type="entry name" value="Kunitz_BPTI_sf"/>
</dbReference>
<dbReference type="InterPro" id="IPR020901">
    <property type="entry name" value="Prtase_inh_Kunz-CS"/>
</dbReference>
<dbReference type="InterPro" id="IPR050098">
    <property type="entry name" value="TFPI/VKTCI-like"/>
</dbReference>
<dbReference type="PANTHER" id="PTHR10083:SF374">
    <property type="entry name" value="BPTI_KUNITZ INHIBITOR DOMAIN-CONTAINING PROTEIN"/>
    <property type="match status" value="1"/>
</dbReference>
<dbReference type="PANTHER" id="PTHR10083">
    <property type="entry name" value="KUNITZ-TYPE PROTEASE INHIBITOR-RELATED"/>
    <property type="match status" value="1"/>
</dbReference>
<dbReference type="Pfam" id="PF00014">
    <property type="entry name" value="Kunitz_BPTI"/>
    <property type="match status" value="1"/>
</dbReference>
<dbReference type="PRINTS" id="PR00759">
    <property type="entry name" value="BASICPTASE"/>
</dbReference>
<dbReference type="SMART" id="SM00131">
    <property type="entry name" value="KU"/>
    <property type="match status" value="1"/>
</dbReference>
<dbReference type="SUPFAM" id="SSF57362">
    <property type="entry name" value="BPTI-like"/>
    <property type="match status" value="1"/>
</dbReference>
<dbReference type="PROSITE" id="PS00280">
    <property type="entry name" value="BPTI_KUNITZ_1"/>
    <property type="match status" value="1"/>
</dbReference>
<dbReference type="PROSITE" id="PS50279">
    <property type="entry name" value="BPTI_KUNITZ_2"/>
    <property type="match status" value="1"/>
</dbReference>
<name>VKTC6_DABSI</name>